<evidence type="ECO:0000255" key="1">
    <source>
        <dbReference type="HAMAP-Rule" id="MF_01727"/>
    </source>
</evidence>
<evidence type="ECO:0000305" key="2"/>
<accession>Q1R5H8</accession>
<keyword id="KW-0067">ATP-binding</keyword>
<keyword id="KW-0997">Cell inner membrane</keyword>
<keyword id="KW-1003">Cell membrane</keyword>
<keyword id="KW-0472">Membrane</keyword>
<keyword id="KW-0547">Nucleotide-binding</keyword>
<keyword id="KW-0762">Sugar transport</keyword>
<keyword id="KW-1278">Translocase</keyword>
<keyword id="KW-0813">Transport</keyword>
<name>UGPC_ECOUT</name>
<protein>
    <recommendedName>
        <fullName evidence="1">sn-glycerol-3-phosphate import ATP-binding protein UgpC</fullName>
        <ecNumber evidence="1">7.6.2.10</ecNumber>
    </recommendedName>
</protein>
<dbReference type="EC" id="7.6.2.10" evidence="1"/>
<dbReference type="EMBL" id="CP000243">
    <property type="protein sequence ID" value="ABE09386.1"/>
    <property type="status" value="ALT_INIT"/>
    <property type="molecule type" value="Genomic_DNA"/>
</dbReference>
<dbReference type="RefSeq" id="WP_000907827.1">
    <property type="nucleotide sequence ID" value="NZ_CP064825.1"/>
</dbReference>
<dbReference type="SMR" id="Q1R5H8"/>
<dbReference type="KEGG" id="eci:UTI89_C3957"/>
<dbReference type="HOGENOM" id="CLU_000604_1_1_6"/>
<dbReference type="Proteomes" id="UP000001952">
    <property type="component" value="Chromosome"/>
</dbReference>
<dbReference type="GO" id="GO:0055052">
    <property type="term" value="C:ATP-binding cassette (ABC) transporter complex, substrate-binding subunit-containing"/>
    <property type="evidence" value="ECO:0007669"/>
    <property type="project" value="TreeGrafter"/>
</dbReference>
<dbReference type="GO" id="GO:0015430">
    <property type="term" value="F:ABC-type glycerol-3-phosphate transporter activity"/>
    <property type="evidence" value="ECO:0007669"/>
    <property type="project" value="UniProtKB-EC"/>
</dbReference>
<dbReference type="GO" id="GO:0005524">
    <property type="term" value="F:ATP binding"/>
    <property type="evidence" value="ECO:0007669"/>
    <property type="project" value="UniProtKB-KW"/>
</dbReference>
<dbReference type="GO" id="GO:0016887">
    <property type="term" value="F:ATP hydrolysis activity"/>
    <property type="evidence" value="ECO:0007669"/>
    <property type="project" value="InterPro"/>
</dbReference>
<dbReference type="GO" id="GO:0008643">
    <property type="term" value="P:carbohydrate transport"/>
    <property type="evidence" value="ECO:0007669"/>
    <property type="project" value="InterPro"/>
</dbReference>
<dbReference type="GO" id="GO:0001407">
    <property type="term" value="P:glycerophosphodiester transmembrane transport"/>
    <property type="evidence" value="ECO:0007669"/>
    <property type="project" value="TreeGrafter"/>
</dbReference>
<dbReference type="CDD" id="cd03301">
    <property type="entry name" value="ABC_MalK_N"/>
    <property type="match status" value="1"/>
</dbReference>
<dbReference type="FunFam" id="3.40.50.300:FF:000042">
    <property type="entry name" value="Maltose/maltodextrin ABC transporter, ATP-binding protein"/>
    <property type="match status" value="1"/>
</dbReference>
<dbReference type="FunFam" id="2.40.50.100:FF:000032">
    <property type="entry name" value="sn-glycerol-3-phosphate import ATP-binding protein UgpC"/>
    <property type="match status" value="1"/>
</dbReference>
<dbReference type="FunFam" id="2.40.50.140:FF:000142">
    <property type="entry name" value="sn-glycerol-3-phosphate import ATP-binding protein UgpC"/>
    <property type="match status" value="1"/>
</dbReference>
<dbReference type="Gene3D" id="2.40.50.100">
    <property type="match status" value="1"/>
</dbReference>
<dbReference type="Gene3D" id="2.40.50.140">
    <property type="entry name" value="Nucleic acid-binding proteins"/>
    <property type="match status" value="1"/>
</dbReference>
<dbReference type="Gene3D" id="3.40.50.300">
    <property type="entry name" value="P-loop containing nucleotide triphosphate hydrolases"/>
    <property type="match status" value="1"/>
</dbReference>
<dbReference type="InterPro" id="IPR003593">
    <property type="entry name" value="AAA+_ATPase"/>
</dbReference>
<dbReference type="InterPro" id="IPR003439">
    <property type="entry name" value="ABC_transporter-like_ATP-bd"/>
</dbReference>
<dbReference type="InterPro" id="IPR017871">
    <property type="entry name" value="ABC_transporter-like_CS"/>
</dbReference>
<dbReference type="InterPro" id="IPR015855">
    <property type="entry name" value="ABC_transpr_MalK-like"/>
</dbReference>
<dbReference type="InterPro" id="IPR047641">
    <property type="entry name" value="ABC_transpr_MalK/UgpC-like"/>
</dbReference>
<dbReference type="InterPro" id="IPR008995">
    <property type="entry name" value="Mo/tungstate-bd_C_term_dom"/>
</dbReference>
<dbReference type="InterPro" id="IPR012340">
    <property type="entry name" value="NA-bd_OB-fold"/>
</dbReference>
<dbReference type="InterPro" id="IPR040582">
    <property type="entry name" value="OB_MalK-like"/>
</dbReference>
<dbReference type="InterPro" id="IPR027417">
    <property type="entry name" value="P-loop_NTPase"/>
</dbReference>
<dbReference type="NCBIfam" id="NF008653">
    <property type="entry name" value="PRK11650.1"/>
    <property type="match status" value="1"/>
</dbReference>
<dbReference type="PANTHER" id="PTHR43875">
    <property type="entry name" value="MALTODEXTRIN IMPORT ATP-BINDING PROTEIN MSMX"/>
    <property type="match status" value="1"/>
</dbReference>
<dbReference type="PANTHER" id="PTHR43875:SF12">
    <property type="entry name" value="SN-GLYCEROL-3-PHOSPHATE IMPORT ATP-BINDING PROTEIN UGPC"/>
    <property type="match status" value="1"/>
</dbReference>
<dbReference type="Pfam" id="PF00005">
    <property type="entry name" value="ABC_tran"/>
    <property type="match status" value="1"/>
</dbReference>
<dbReference type="Pfam" id="PF17912">
    <property type="entry name" value="OB_MalK"/>
    <property type="match status" value="1"/>
</dbReference>
<dbReference type="SMART" id="SM00382">
    <property type="entry name" value="AAA"/>
    <property type="match status" value="1"/>
</dbReference>
<dbReference type="SUPFAM" id="SSF50331">
    <property type="entry name" value="MOP-like"/>
    <property type="match status" value="1"/>
</dbReference>
<dbReference type="SUPFAM" id="SSF52540">
    <property type="entry name" value="P-loop containing nucleoside triphosphate hydrolases"/>
    <property type="match status" value="1"/>
</dbReference>
<dbReference type="PROSITE" id="PS00211">
    <property type="entry name" value="ABC_TRANSPORTER_1"/>
    <property type="match status" value="1"/>
</dbReference>
<dbReference type="PROSITE" id="PS50893">
    <property type="entry name" value="ABC_TRANSPORTER_2"/>
    <property type="match status" value="1"/>
</dbReference>
<dbReference type="PROSITE" id="PS51315">
    <property type="entry name" value="UGPC"/>
    <property type="match status" value="1"/>
</dbReference>
<reference key="1">
    <citation type="journal article" date="2006" name="Proc. Natl. Acad. Sci. U.S.A.">
        <title>Identification of genes subject to positive selection in uropathogenic strains of Escherichia coli: a comparative genomics approach.</title>
        <authorList>
            <person name="Chen S.L."/>
            <person name="Hung C.-S."/>
            <person name="Xu J."/>
            <person name="Reigstad C.S."/>
            <person name="Magrini V."/>
            <person name="Sabo A."/>
            <person name="Blasiar D."/>
            <person name="Bieri T."/>
            <person name="Meyer R.R."/>
            <person name="Ozersky P."/>
            <person name="Armstrong J.R."/>
            <person name="Fulton R.S."/>
            <person name="Latreille J.P."/>
            <person name="Spieth J."/>
            <person name="Hooton T.M."/>
            <person name="Mardis E.R."/>
            <person name="Hultgren S.J."/>
            <person name="Gordon J.I."/>
        </authorList>
    </citation>
    <scope>NUCLEOTIDE SEQUENCE [LARGE SCALE GENOMIC DNA]</scope>
    <source>
        <strain>UTI89 / UPEC</strain>
    </source>
</reference>
<gene>
    <name evidence="1" type="primary">ugpC</name>
    <name type="ordered locus">UTI89_C3957</name>
</gene>
<proteinExistence type="inferred from homology"/>
<organism>
    <name type="scientific">Escherichia coli (strain UTI89 / UPEC)</name>
    <dbReference type="NCBI Taxonomy" id="364106"/>
    <lineage>
        <taxon>Bacteria</taxon>
        <taxon>Pseudomonadati</taxon>
        <taxon>Pseudomonadota</taxon>
        <taxon>Gammaproteobacteria</taxon>
        <taxon>Enterobacterales</taxon>
        <taxon>Enterobacteriaceae</taxon>
        <taxon>Escherichia</taxon>
    </lineage>
</organism>
<sequence length="356" mass="39502">MAGLKLQAVTKSWDGKTQVIKPLTLDVADGEFIVMVGPSGCGKSTLLRMVAGLERVTTGDIWIDRKRVTEMEPKDRGIAMVFQNYALYPHMSVEENMAWGLKIRGMGKQQIAERVKEAARILELDGLLKRRPRELSGGQRQRVAMGRAIVREPAVFLFDEPLSNLDAKLRVQMRLELQQLHRRLKTTSLYVTHDQVEAMTLAQRVMVMNGGVAEQIGTPVEVYEKPASLFVASFIGSPAMNLLAGRVNNEGTHFELDGGITLPLNGGYRQYAGRKMTLGIRPEHIALSSQAEGGVPLVMDTLEILGADNLAHGRWGEQKLVVRLAHQERPTAGSTLWLHLPENQLHLFDGETGQRV</sequence>
<comment type="function">
    <text evidence="1">Part of the ABC transporter complex UgpBAEC involved in sn-glycerol-3-phosphate (G3P) import. Responsible for energy coupling to the transport system.</text>
</comment>
<comment type="catalytic activity">
    <reaction evidence="1">
        <text>sn-glycerol 3-phosphate(out) + ATP + H2O = sn-glycerol 3-phosphate(in) + ADP + phosphate + H(+)</text>
        <dbReference type="Rhea" id="RHEA:21668"/>
        <dbReference type="ChEBI" id="CHEBI:15377"/>
        <dbReference type="ChEBI" id="CHEBI:15378"/>
        <dbReference type="ChEBI" id="CHEBI:30616"/>
        <dbReference type="ChEBI" id="CHEBI:43474"/>
        <dbReference type="ChEBI" id="CHEBI:57597"/>
        <dbReference type="ChEBI" id="CHEBI:456216"/>
        <dbReference type="EC" id="7.6.2.10"/>
    </reaction>
</comment>
<comment type="subunit">
    <text evidence="1">The complex is composed of two ATP-binding proteins (UgpC), two transmembrane proteins (UgpA and UgpE) and a solute-binding protein (UgpB).</text>
</comment>
<comment type="subcellular location">
    <subcellularLocation>
        <location evidence="1">Cell inner membrane</location>
        <topology evidence="1">Peripheral membrane protein</topology>
    </subcellularLocation>
</comment>
<comment type="similarity">
    <text evidence="1">Belongs to the ABC transporter superfamily. sn-glycerol-3-phosphate importer (TC 3.A.1.1.3) family.</text>
</comment>
<comment type="sequence caution" evidence="2">
    <conflict type="erroneous initiation">
        <sequence resource="EMBL-CDS" id="ABE09386"/>
    </conflict>
</comment>
<feature type="chain" id="PRO_0000289750" description="sn-glycerol-3-phosphate import ATP-binding protein UgpC">
    <location>
        <begin position="1"/>
        <end position="356"/>
    </location>
</feature>
<feature type="domain" description="ABC transporter" evidence="1">
    <location>
        <begin position="4"/>
        <end position="235"/>
    </location>
</feature>
<feature type="binding site" evidence="1">
    <location>
        <begin position="37"/>
        <end position="44"/>
    </location>
    <ligand>
        <name>ATP</name>
        <dbReference type="ChEBI" id="CHEBI:30616"/>
    </ligand>
</feature>